<organism>
    <name type="scientific">Saccharomyces cerevisiae (strain ATCC 204508 / S288c)</name>
    <name type="common">Baker's yeast</name>
    <dbReference type="NCBI Taxonomy" id="559292"/>
    <lineage>
        <taxon>Eukaryota</taxon>
        <taxon>Fungi</taxon>
        <taxon>Dikarya</taxon>
        <taxon>Ascomycota</taxon>
        <taxon>Saccharomycotina</taxon>
        <taxon>Saccharomycetes</taxon>
        <taxon>Saccharomycetales</taxon>
        <taxon>Saccharomycetaceae</taxon>
        <taxon>Saccharomyces</taxon>
    </lineage>
</organism>
<keyword id="KW-0002">3D-structure</keyword>
<keyword id="KW-0903">Direct protein sequencing</keyword>
<keyword id="KW-0472">Membrane</keyword>
<keyword id="KW-0496">Mitochondrion</keyword>
<keyword id="KW-0999">Mitochondrion inner membrane</keyword>
<keyword id="KW-0560">Oxidoreductase</keyword>
<keyword id="KW-1185">Reference proteome</keyword>
<keyword id="KW-0809">Transit peptide</keyword>
<keyword id="KW-0812">Transmembrane</keyword>
<keyword id="KW-1133">Transmembrane helix</keyword>
<feature type="transit peptide" description="Mitochondrion" evidence="3 8 9 10">
    <location>
        <begin position="1"/>
        <end position="20"/>
    </location>
</feature>
<feature type="chain" id="PRO_0000006097" description="Cytochrome c oxidase subunit 5A, mitochondrial">
    <location>
        <begin position="21"/>
        <end position="153"/>
    </location>
</feature>
<feature type="topological domain" description="Mitochondrial matrix" evidence="6">
    <location>
        <begin position="21"/>
        <end position="88"/>
    </location>
</feature>
<feature type="transmembrane region" description="Helical" evidence="6">
    <location>
        <begin position="89"/>
        <end position="111"/>
    </location>
</feature>
<feature type="topological domain" description="Mitochondrial intermembrane" evidence="6">
    <location>
        <begin position="112"/>
        <end position="153"/>
    </location>
</feature>
<feature type="sequence conflict" description="In Ref. 10; AA sequence." evidence="12" ref="10">
    <location>
        <position position="51"/>
    </location>
</feature>
<feature type="helix" evidence="17">
    <location>
        <begin position="28"/>
        <end position="31"/>
    </location>
</feature>
<feature type="helix" evidence="17">
    <location>
        <begin position="34"/>
        <end position="37"/>
    </location>
</feature>
<feature type="helix" evidence="17">
    <location>
        <begin position="38"/>
        <end position="40"/>
    </location>
</feature>
<feature type="helix" evidence="17">
    <location>
        <begin position="43"/>
        <end position="56"/>
    </location>
</feature>
<feature type="strand" evidence="16">
    <location>
        <begin position="57"/>
        <end position="59"/>
    </location>
</feature>
<feature type="helix" evidence="17">
    <location>
        <begin position="61"/>
        <end position="63"/>
    </location>
</feature>
<feature type="helix" evidence="17">
    <location>
        <begin position="66"/>
        <end position="77"/>
    </location>
</feature>
<feature type="strand" evidence="15">
    <location>
        <begin position="78"/>
        <end position="80"/>
    </location>
</feature>
<feature type="helix" evidence="17">
    <location>
        <begin position="81"/>
        <end position="83"/>
    </location>
</feature>
<feature type="helix" evidence="17">
    <location>
        <begin position="91"/>
        <end position="113"/>
    </location>
</feature>
<feature type="helix" evidence="17">
    <location>
        <begin position="114"/>
        <end position="116"/>
    </location>
</feature>
<feature type="helix" evidence="14">
    <location>
        <begin position="122"/>
        <end position="125"/>
    </location>
</feature>
<feature type="helix" evidence="17">
    <location>
        <begin position="126"/>
        <end position="138"/>
    </location>
</feature>
<feature type="turn" evidence="17">
    <location>
        <begin position="143"/>
        <end position="145"/>
    </location>
</feature>
<reference key="1">
    <citation type="journal article" date="1985" name="Curr. Genet.">
        <title>Primary structure of a gene for subunit V of the cytochrome c oxidase from Saccharomyces cerevisiae.</title>
        <authorList>
            <person name="Seraphin B."/>
            <person name="Simon M."/>
            <person name="Faye G."/>
        </authorList>
    </citation>
    <scope>NUCLEOTIDE SEQUENCE [GENOMIC DNA]</scope>
</reference>
<reference key="2">
    <citation type="journal article" date="1985" name="J. Biol. Chem.">
        <title>Cloning and characterization of the yeast nuclear gene for subunit 5 of cytochrome oxidase.</title>
        <authorList>
            <person name="Koerner T.J."/>
            <person name="Hill J."/>
            <person name="Tzagoloff A."/>
        </authorList>
    </citation>
    <scope>NUCLEOTIDE SEQUENCE [GENOMIC DNA]</scope>
</reference>
<reference key="3">
    <citation type="journal article" date="1987" name="Mol. Cell. Biol.">
        <title>Structural analysis of two genes encoding divergent forms of yeast cytochrome c oxidase subunit V.</title>
        <authorList>
            <person name="Cumsky M.G."/>
            <person name="Trueblood C.E."/>
            <person name="Ko C."/>
            <person name="Poyton R.O."/>
        </authorList>
    </citation>
    <scope>NUCLEOTIDE SEQUENCE [GENOMIC DNA]</scope>
</reference>
<reference key="4">
    <citation type="journal article" date="1995" name="Yeast">
        <title>The sequence of a 44 420 bp fragment located on the left arm of chromosome XIV from Saccharomyces cerevisiae.</title>
        <authorList>
            <person name="Bergez P."/>
            <person name="Doignon F."/>
            <person name="Crouzet M."/>
        </authorList>
    </citation>
    <scope>NUCLEOTIDE SEQUENCE [GENOMIC DNA]</scope>
    <source>
        <strain>S288c / FY1676</strain>
    </source>
</reference>
<reference key="5">
    <citation type="journal article" date="1996" name="Yeast">
        <authorList>
            <person name="Bergez P."/>
            <person name="Doignon F."/>
            <person name="Crouzet M."/>
        </authorList>
    </citation>
    <scope>ERRATUM OF PUBMED:8533472</scope>
</reference>
<reference key="6">
    <citation type="journal article" date="1997" name="Nature">
        <title>The nucleotide sequence of Saccharomyces cerevisiae chromosome XIV and its evolutionary implications.</title>
        <authorList>
            <person name="Philippsen P."/>
            <person name="Kleine K."/>
            <person name="Poehlmann R."/>
            <person name="Duesterhoeft A."/>
            <person name="Hamberg K."/>
            <person name="Hegemann J.H."/>
            <person name="Obermaier B."/>
            <person name="Urrestarazu L.A."/>
            <person name="Aert R."/>
            <person name="Albermann K."/>
            <person name="Altmann R."/>
            <person name="Andre B."/>
            <person name="Baladron V."/>
            <person name="Ballesta J.P.G."/>
            <person name="Becam A.-M."/>
            <person name="Beinhauer J.D."/>
            <person name="Boskovic J."/>
            <person name="Buitrago M.J."/>
            <person name="Bussereau F."/>
            <person name="Coster F."/>
            <person name="Crouzet M."/>
            <person name="D'Angelo M."/>
            <person name="Dal Pero F."/>
            <person name="De Antoni A."/>
            <person name="del Rey F."/>
            <person name="Doignon F."/>
            <person name="Domdey H."/>
            <person name="Dubois E."/>
            <person name="Fiedler T.A."/>
            <person name="Fleig U."/>
            <person name="Floeth M."/>
            <person name="Fritz C."/>
            <person name="Gaillardin C."/>
            <person name="Garcia-Cantalejo J.M."/>
            <person name="Glansdorff N."/>
            <person name="Goffeau A."/>
            <person name="Gueldener U."/>
            <person name="Herbert C.J."/>
            <person name="Heumann K."/>
            <person name="Heuss-Neitzel D."/>
            <person name="Hilbert H."/>
            <person name="Hinni K."/>
            <person name="Iraqui Houssaini I."/>
            <person name="Jacquet M."/>
            <person name="Jimenez A."/>
            <person name="Jonniaux J.-L."/>
            <person name="Karpfinger-Hartl L."/>
            <person name="Lanfranchi G."/>
            <person name="Lepingle A."/>
            <person name="Levesque H."/>
            <person name="Lyck R."/>
            <person name="Maftahi M."/>
            <person name="Mallet L."/>
            <person name="Maurer C.T.C."/>
            <person name="Messenguy F."/>
            <person name="Mewes H.-W."/>
            <person name="Moestl D."/>
            <person name="Nasr F."/>
            <person name="Nicaud J.-M."/>
            <person name="Niedenthal R.K."/>
            <person name="Pandolfo D."/>
            <person name="Pierard A."/>
            <person name="Piravandi E."/>
            <person name="Planta R.J."/>
            <person name="Pohl T.M."/>
            <person name="Purnelle B."/>
            <person name="Rebischung C."/>
            <person name="Remacha M.A."/>
            <person name="Revuelta J.L."/>
            <person name="Rinke M."/>
            <person name="Saiz J.E."/>
            <person name="Sartorello F."/>
            <person name="Scherens B."/>
            <person name="Sen-Gupta M."/>
            <person name="Soler-Mira A."/>
            <person name="Urbanus J.H.M."/>
            <person name="Valle G."/>
            <person name="Van Dyck L."/>
            <person name="Verhasselt P."/>
            <person name="Vierendeels F."/>
            <person name="Vissers S."/>
            <person name="Voet M."/>
            <person name="Volckaert G."/>
            <person name="Wach A."/>
            <person name="Wambutt R."/>
            <person name="Wedler H."/>
            <person name="Zollner A."/>
            <person name="Hani J."/>
        </authorList>
    </citation>
    <scope>NUCLEOTIDE SEQUENCE [LARGE SCALE GENOMIC DNA]</scope>
    <source>
        <strain>ATCC 204508 / S288c</strain>
    </source>
</reference>
<reference key="7">
    <citation type="journal article" date="2014" name="G3 (Bethesda)">
        <title>The reference genome sequence of Saccharomyces cerevisiae: Then and now.</title>
        <authorList>
            <person name="Engel S.R."/>
            <person name="Dietrich F.S."/>
            <person name="Fisk D.G."/>
            <person name="Binkley G."/>
            <person name="Balakrishnan R."/>
            <person name="Costanzo M.C."/>
            <person name="Dwight S.S."/>
            <person name="Hitz B.C."/>
            <person name="Karra K."/>
            <person name="Nash R.S."/>
            <person name="Weng S."/>
            <person name="Wong E.D."/>
            <person name="Lloyd P."/>
            <person name="Skrzypek M.S."/>
            <person name="Miyasato S.R."/>
            <person name="Simison M."/>
            <person name="Cherry J.M."/>
        </authorList>
    </citation>
    <scope>GENOME REANNOTATION</scope>
    <source>
        <strain>ATCC 204508 / S288c</strain>
    </source>
</reference>
<reference key="8">
    <citation type="journal article" date="2007" name="Genome Res.">
        <title>Approaching a complete repository of sequence-verified protein-encoding clones for Saccharomyces cerevisiae.</title>
        <authorList>
            <person name="Hu Y."/>
            <person name="Rolfs A."/>
            <person name="Bhullar B."/>
            <person name="Murthy T.V.S."/>
            <person name="Zhu C."/>
            <person name="Berger M.F."/>
            <person name="Camargo A.A."/>
            <person name="Kelley F."/>
            <person name="McCarron S."/>
            <person name="Jepson D."/>
            <person name="Richardson A."/>
            <person name="Raphael J."/>
            <person name="Moreira D."/>
            <person name="Taycher E."/>
            <person name="Zuo D."/>
            <person name="Mohr S."/>
            <person name="Kane M.F."/>
            <person name="Williamson J."/>
            <person name="Simpson A.J.G."/>
            <person name="Bulyk M.L."/>
            <person name="Harlow E."/>
            <person name="Marsischky G."/>
            <person name="Kolodner R.D."/>
            <person name="LaBaer J."/>
        </authorList>
    </citation>
    <scope>NUCLEOTIDE SEQUENCE [GENOMIC DNA]</scope>
    <source>
        <strain>ATCC 204508 / S288c</strain>
    </source>
</reference>
<reference key="9">
    <citation type="journal article" date="1985" name="Proc. Natl. Acad. Sci. U.S.A.">
        <title>Two nonidentical forms of subunit V are functional in yeast cytochrome c oxidase.</title>
        <authorList>
            <person name="Cumsky M.G."/>
            <person name="Ko C."/>
            <person name="Trueblood C.E."/>
            <person name="Poyton R.O."/>
        </authorList>
    </citation>
    <scope>NUCLEOTIDE SEQUENCE [GENOMIC DNA] OF 21-98</scope>
</reference>
<reference key="10">
    <citation type="journal article" date="1984" name="J. Biol. Chem.">
        <title>The nuclear-coded subunits of yeast cytochrome c oxidase. III. Identification of homologous subunits in yeast, bovine heart, and Neurospora crassa cytochrome c oxidases.</title>
        <authorList>
            <person name="Power S.D."/>
            <person name="Lochrie M.A."/>
            <person name="Poyton R.O."/>
        </authorList>
    </citation>
    <scope>PROTEIN SEQUENCE OF 21-69</scope>
</reference>
<reference key="11">
    <citation type="journal article" date="1983" name="J. Biol. Chem.">
        <title>Import of proteins into mitochondria. Isolated yeast mitochondria and a solubilized matrix protease correctly process cytochrome c oxidase subunit V precursor at the NH2 terminus.</title>
        <authorList>
            <person name="Cerletti N."/>
            <person name="Bohni P.C."/>
            <person name="Suda K."/>
        </authorList>
    </citation>
    <scope>PROTEIN SEQUENCE OF 21-35</scope>
</reference>
<reference key="12">
    <citation type="journal article" date="1992" name="J. Biol. Chem.">
        <title>Purification of yeast cytochrome c oxidase with a subunit composition resembling the mammalian enzyme.</title>
        <authorList>
            <person name="Taanman J.-W."/>
            <person name="Capaldi R.A."/>
        </authorList>
    </citation>
    <scope>PROTEIN SEQUENCE OF 21-34</scope>
    <scope>COMPOSITION OF THE CYTOCHROME C OXIDASE COMPLEX</scope>
</reference>
<reference key="13">
    <citation type="journal article" date="1995" name="Eur. J. Biochem.">
        <title>Kinetic properties and ligand binding of the eleven-subunit cytochrome-c oxidase from Saccharomyces cerevisiae isolated with a novel large-scale purification method.</title>
        <authorList>
            <person name="Geier B.M."/>
            <person name="Schagger H."/>
            <person name="Ortwein C."/>
            <person name="Link T.A."/>
            <person name="Hagen W.R."/>
            <person name="Brandt U."/>
            <person name="Von Jagow G."/>
        </authorList>
    </citation>
    <scope>PROTEIN SEQUENCE OF 21-23</scope>
    <scope>COMPOSITION OF THE CYTOCHROME C OXIDASE COMPLEX</scope>
</reference>
<reference key="14">
    <citation type="journal article" date="1989" name="Mol. Cell. Biol.">
        <title>Inverse regulation of the yeast COX5 genes by oxygen and heme.</title>
        <authorList>
            <person name="Hodge M.R."/>
            <person name="Kim G."/>
            <person name="Singh K."/>
            <person name="Cumsky M.G."/>
        </authorList>
    </citation>
    <scope>SUBUNIT</scope>
    <scope>INDUCTION</scope>
</reference>
<reference key="15">
    <citation type="journal article" date="1997" name="J. Biol. Chem.">
        <title>Effects of oxygen concentration on the expression of cytochrome c and cytochrome c oxidase genes in yeast.</title>
        <authorList>
            <person name="Burke P.V."/>
            <person name="Raitt D.C."/>
            <person name="Allen L.A."/>
            <person name="Kellogg E.A."/>
            <person name="Poyton R.O."/>
        </authorList>
    </citation>
    <scope>INDUCTION</scope>
</reference>
<reference key="16">
    <citation type="journal article" date="2000" name="EMBO J.">
        <title>Supercomplexes in the respiratory chains of yeast and mammalian mitochondria.</title>
        <authorList>
            <person name="Schaegger H."/>
            <person name="Pfeiffer K."/>
        </authorList>
    </citation>
    <scope>FORMATION OF CYTOCHROME BC1-CYTOCHROME C OXIDASE SUPERCOMPLEX</scope>
</reference>
<reference key="17">
    <citation type="journal article" date="2000" name="J. Biol. Chem.">
        <title>The cytochrome bc1 and cytochrome c oxidase complexes associate to form a single supracomplex in yeast mitochondria.</title>
        <authorList>
            <person name="Cruciat C.M."/>
            <person name="Brunner S."/>
            <person name="Baumann F."/>
            <person name="Neupert W."/>
            <person name="Stuart R.A."/>
        </authorList>
    </citation>
    <scope>FORMATION OF CYTOCHROME BC1-CYTOCHROME C OXIDASE SUPERCOMPLEX</scope>
</reference>
<reference key="18">
    <citation type="journal article" date="2003" name="Nature">
        <title>Global analysis of protein expression in yeast.</title>
        <authorList>
            <person name="Ghaemmaghami S."/>
            <person name="Huh W.-K."/>
            <person name="Bower K."/>
            <person name="Howson R.W."/>
            <person name="Belle A."/>
            <person name="Dephoure N."/>
            <person name="O'Shea E.K."/>
            <person name="Weissman J.S."/>
        </authorList>
    </citation>
    <scope>LEVEL OF PROTEIN EXPRESSION [LARGE SCALE ANALYSIS]</scope>
</reference>
<reference key="19">
    <citation type="journal article" date="2019" name="Nat. Struct. Mol. Biol.">
        <title>Cryo-EM structure of the yeast respiratory supercomplex.</title>
        <authorList>
            <person name="Rathore S."/>
            <person name="Berndtsson J."/>
            <person name="Marin-Buera L."/>
            <person name="Conrad J."/>
            <person name="Carroni M."/>
            <person name="Brzezinski P."/>
            <person name="Ott M."/>
        </authorList>
    </citation>
    <scope>STRUCTURE BY ELECTRON MICROSCOPY (3.23 ANGSTROMS) OF 1-153</scope>
</reference>
<reference key="20">
    <citation type="journal article" date="2019" name="Nat. Struct. Mol. Biol.">
        <title>Structure of yeast cytochrome c oxidase in a supercomplex with cytochrome bc1.</title>
        <authorList>
            <person name="Hartley A.M."/>
            <person name="Lukoyanova N."/>
            <person name="Zhang Y."/>
            <person name="Cabrera-Orefice A."/>
            <person name="Arnold S."/>
            <person name="Meunier B."/>
            <person name="Pinotsis N."/>
            <person name="Marechal A."/>
        </authorList>
    </citation>
    <scope>STRUCTURE BY ELECTRON MICROSCOPY (3.35 ANGSTROMS)</scope>
    <scope>FUNCTION</scope>
</reference>
<gene>
    <name type="primary">COX5A</name>
    <name type="ordered locus">YNL052W</name>
    <name type="ORF">N2474</name>
    <name type="ORF">YNL2474W</name>
</gene>
<sequence>MLRNTFTRAGGLSRITSVRFAQTHALSNAAVMDLQSRWENMPSTEQQDIVSKLSERQKLPWAQLTEPEKQAVWYISYGEWGPRRPVLNKGDSSFIAKGVAAGLLFSVGLFAVVRMAGGQDAKTMNKEWQLKSDEYLKSKNANPWGGYSQVQSK</sequence>
<name>COX5A_YEAST</name>
<evidence type="ECO:0000269" key="1">
    <source>
    </source>
</evidence>
<evidence type="ECO:0000269" key="2">
    <source>
    </source>
</evidence>
<evidence type="ECO:0000269" key="3">
    <source>
    </source>
</evidence>
<evidence type="ECO:0000269" key="4">
    <source>
    </source>
</evidence>
<evidence type="ECO:0000269" key="5">
    <source>
    </source>
</evidence>
<evidence type="ECO:0000269" key="6">
    <source>
    </source>
</evidence>
<evidence type="ECO:0000269" key="7">
    <source>
    </source>
</evidence>
<evidence type="ECO:0000269" key="8">
    <source>
    </source>
</evidence>
<evidence type="ECO:0000269" key="9">
    <source>
    </source>
</evidence>
<evidence type="ECO:0000269" key="10">
    <source>
    </source>
</evidence>
<evidence type="ECO:0000269" key="11">
    <source>
    </source>
</evidence>
<evidence type="ECO:0000305" key="12"/>
<evidence type="ECO:0000305" key="13">
    <source>
    </source>
</evidence>
<evidence type="ECO:0007829" key="14">
    <source>
        <dbReference type="PDB" id="6GIQ"/>
    </source>
</evidence>
<evidence type="ECO:0007829" key="15">
    <source>
        <dbReference type="PDB" id="6HU9"/>
    </source>
</evidence>
<evidence type="ECO:0007829" key="16">
    <source>
        <dbReference type="PDB" id="6YMX"/>
    </source>
</evidence>
<evidence type="ECO:0007829" key="17">
    <source>
        <dbReference type="PDB" id="9ETZ"/>
    </source>
</evidence>
<dbReference type="EMBL" id="X02561">
    <property type="protein sequence ID" value="CAA26403.1"/>
    <property type="molecule type" value="Genomic_DNA"/>
</dbReference>
<dbReference type="EMBL" id="M11770">
    <property type="protein sequence ID" value="AAA34518.1"/>
    <property type="molecule type" value="Genomic_DNA"/>
</dbReference>
<dbReference type="EMBL" id="M17800">
    <property type="protein sequence ID" value="AAA34520.1"/>
    <property type="molecule type" value="Genomic_DNA"/>
</dbReference>
<dbReference type="EMBL" id="U12141">
    <property type="protein sequence ID" value="AAA99660.1"/>
    <property type="molecule type" value="Genomic_DNA"/>
</dbReference>
<dbReference type="EMBL" id="Z71328">
    <property type="protein sequence ID" value="CAA95921.1"/>
    <property type="molecule type" value="Genomic_DNA"/>
</dbReference>
<dbReference type="EMBL" id="AY558131">
    <property type="protein sequence ID" value="AAS56457.1"/>
    <property type="molecule type" value="Genomic_DNA"/>
</dbReference>
<dbReference type="EMBL" id="M11141">
    <property type="protein sequence ID" value="AAA34519.1"/>
    <property type="molecule type" value="Genomic_DNA"/>
</dbReference>
<dbReference type="EMBL" id="BK006947">
    <property type="protein sequence ID" value="DAA10493.1"/>
    <property type="molecule type" value="Genomic_DNA"/>
</dbReference>
<dbReference type="PIR" id="S05833">
    <property type="entry name" value="OTBY5A"/>
</dbReference>
<dbReference type="RefSeq" id="NP_014346.1">
    <property type="nucleotide sequence ID" value="NM_001182891.1"/>
</dbReference>
<dbReference type="PDB" id="6GIQ">
    <property type="method" value="EM"/>
    <property type="resolution" value="3.23 A"/>
    <property type="chains" value="e=1-153"/>
</dbReference>
<dbReference type="PDB" id="6HU9">
    <property type="method" value="EM"/>
    <property type="resolution" value="3.35 A"/>
    <property type="chains" value="e/q=21-153"/>
</dbReference>
<dbReference type="PDB" id="6YMX">
    <property type="method" value="EM"/>
    <property type="resolution" value="3.17 A"/>
    <property type="chains" value="e=25-152"/>
</dbReference>
<dbReference type="PDB" id="6YMY">
    <property type="method" value="EM"/>
    <property type="resolution" value="3.41 A"/>
    <property type="chains" value="e=25-152"/>
</dbReference>
<dbReference type="PDB" id="7Z10">
    <property type="method" value="EM"/>
    <property type="resolution" value="3.87 A"/>
    <property type="chains" value="e=21-153"/>
</dbReference>
<dbReference type="PDB" id="8DH6">
    <property type="method" value="EM"/>
    <property type="resolution" value="2.94 A"/>
    <property type="chains" value="e=21-153"/>
</dbReference>
<dbReference type="PDB" id="8E7S">
    <property type="method" value="EM"/>
    <property type="resolution" value="3.20 A"/>
    <property type="chains" value="W/w=1-153"/>
</dbReference>
<dbReference type="PDB" id="8EC0">
    <property type="method" value="EM"/>
    <property type="resolution" value="3.30 A"/>
    <property type="chains" value="W=1-153"/>
</dbReference>
<dbReference type="PDB" id="9ETZ">
    <property type="method" value="EM"/>
    <property type="resolution" value="2.40 A"/>
    <property type="chains" value="e=21-153"/>
</dbReference>
<dbReference type="PDBsum" id="6GIQ"/>
<dbReference type="PDBsum" id="6HU9"/>
<dbReference type="PDBsum" id="6YMX"/>
<dbReference type="PDBsum" id="6YMY"/>
<dbReference type="PDBsum" id="7Z10"/>
<dbReference type="PDBsum" id="8DH6"/>
<dbReference type="PDBsum" id="8E7S"/>
<dbReference type="PDBsum" id="8EC0"/>
<dbReference type="PDBsum" id="9ETZ"/>
<dbReference type="EMDB" id="EMD-10375"/>
<dbReference type="EMDB" id="EMD-10376"/>
<dbReference type="EMDB" id="EMD-10847"/>
<dbReference type="EMDB" id="EMD-10848"/>
<dbReference type="EMDB" id="EMD-14436"/>
<dbReference type="EMDB" id="EMD-19963"/>
<dbReference type="EMDB" id="EMD-27430"/>
<dbReference type="EMDB" id="EMD-27940"/>
<dbReference type="EMDB" id="EMD-28011"/>
<dbReference type="SMR" id="P00424"/>
<dbReference type="BioGRID" id="35772">
    <property type="interactions" value="275"/>
</dbReference>
<dbReference type="ComplexPortal" id="CPX-1721">
    <property type="entry name" value="Mitochondrial respiratory chain complex IV, COX5A variant"/>
</dbReference>
<dbReference type="DIP" id="DIP-6820N"/>
<dbReference type="FunCoup" id="P00424">
    <property type="interactions" value="183"/>
</dbReference>
<dbReference type="IntAct" id="P00424">
    <property type="interactions" value="35"/>
</dbReference>
<dbReference type="MINT" id="P00424"/>
<dbReference type="STRING" id="4932.YNL052W"/>
<dbReference type="TCDB" id="3.D.4.8.1">
    <property type="family name" value="the proton-translocating cytochrome oxidase (cox) superfamily"/>
</dbReference>
<dbReference type="PaxDb" id="4932-YNL052W"/>
<dbReference type="PeptideAtlas" id="P00424"/>
<dbReference type="EnsemblFungi" id="YNL052W_mRNA">
    <property type="protein sequence ID" value="YNL052W"/>
    <property type="gene ID" value="YNL052W"/>
</dbReference>
<dbReference type="GeneID" id="855675"/>
<dbReference type="KEGG" id="sce:YNL052W"/>
<dbReference type="AGR" id="SGD:S000004997"/>
<dbReference type="SGD" id="S000004997">
    <property type="gene designation" value="COX5A"/>
</dbReference>
<dbReference type="VEuPathDB" id="FungiDB:YNL052W"/>
<dbReference type="eggNOG" id="KOG4075">
    <property type="taxonomic scope" value="Eukaryota"/>
</dbReference>
<dbReference type="GeneTree" id="ENSGT00390000002407"/>
<dbReference type="HOGENOM" id="CLU_070101_2_0_1"/>
<dbReference type="InParanoid" id="P00424"/>
<dbReference type="OMA" id="YVIHLFA"/>
<dbReference type="OrthoDB" id="186013at2759"/>
<dbReference type="BioCyc" id="MetaCyc:YNL052W-MONOMER"/>
<dbReference type="BioCyc" id="YEAST:YNL052W-MONOMER"/>
<dbReference type="UniPathway" id="UPA00705"/>
<dbReference type="BioGRID-ORCS" id="855675">
    <property type="hits" value="3 hits in 10 CRISPR screens"/>
</dbReference>
<dbReference type="PRO" id="PR:P00424"/>
<dbReference type="Proteomes" id="UP000002311">
    <property type="component" value="Chromosome XIV"/>
</dbReference>
<dbReference type="RNAct" id="P00424">
    <property type="molecule type" value="protein"/>
</dbReference>
<dbReference type="GO" id="GO:0005743">
    <property type="term" value="C:mitochondrial inner membrane"/>
    <property type="evidence" value="ECO:0000304"/>
    <property type="project" value="Reactome"/>
</dbReference>
<dbReference type="GO" id="GO:0005758">
    <property type="term" value="C:mitochondrial intermembrane space"/>
    <property type="evidence" value="ECO:0000304"/>
    <property type="project" value="Reactome"/>
</dbReference>
<dbReference type="GO" id="GO:0005739">
    <property type="term" value="C:mitochondrion"/>
    <property type="evidence" value="ECO:0007005"/>
    <property type="project" value="SGD"/>
</dbReference>
<dbReference type="GO" id="GO:0045277">
    <property type="term" value="C:respiratory chain complex IV"/>
    <property type="evidence" value="ECO:0000314"/>
    <property type="project" value="SGD"/>
</dbReference>
<dbReference type="GO" id="GO:0016491">
    <property type="term" value="F:oxidoreductase activity"/>
    <property type="evidence" value="ECO:0007669"/>
    <property type="project" value="UniProtKB-KW"/>
</dbReference>
<dbReference type="GO" id="GO:0006123">
    <property type="term" value="P:mitochondrial electron transport, cytochrome c to oxygen"/>
    <property type="evidence" value="ECO:0000314"/>
    <property type="project" value="SGD"/>
</dbReference>
<dbReference type="GO" id="GO:1902600">
    <property type="term" value="P:proton transmembrane transport"/>
    <property type="evidence" value="ECO:0007669"/>
    <property type="project" value="GOC"/>
</dbReference>
<dbReference type="CDD" id="cd00922">
    <property type="entry name" value="Cyt_c_Oxidase_IV"/>
    <property type="match status" value="1"/>
</dbReference>
<dbReference type="FunFam" id="1.10.442.10:FF:000002">
    <property type="entry name" value="Cytochrome c oxidase subunit V"/>
    <property type="match status" value="1"/>
</dbReference>
<dbReference type="Gene3D" id="1.10.442.10">
    <property type="entry name" value="Cytochrome c oxidase subunit IV"/>
    <property type="match status" value="1"/>
</dbReference>
<dbReference type="InterPro" id="IPR004203">
    <property type="entry name" value="Cyt_c_oxidase_su4_fam"/>
</dbReference>
<dbReference type="InterPro" id="IPR036639">
    <property type="entry name" value="Cyt_c_oxidase_su4_sf"/>
</dbReference>
<dbReference type="PANTHER" id="PTHR10707:SF10">
    <property type="entry name" value="CYTOCHROME C OXIDASE SUBUNIT 4"/>
    <property type="match status" value="1"/>
</dbReference>
<dbReference type="PANTHER" id="PTHR10707">
    <property type="entry name" value="CYTOCHROME C OXIDASE SUBUNIT IV"/>
    <property type="match status" value="1"/>
</dbReference>
<dbReference type="Pfam" id="PF02936">
    <property type="entry name" value="COX4"/>
    <property type="match status" value="1"/>
</dbReference>
<dbReference type="SUPFAM" id="SSF81406">
    <property type="entry name" value="Mitochondrial cytochrome c oxidase subunit IV"/>
    <property type="match status" value="1"/>
</dbReference>
<protein>
    <recommendedName>
        <fullName>Cytochrome c oxidase subunit 5A, mitochondrial</fullName>
    </recommendedName>
    <alternativeName>
        <fullName>Cytochrome c oxidase polypeptide Va</fullName>
    </alternativeName>
</protein>
<comment type="function">
    <text evidence="13">Component of the cytochrome c oxidase, the last enzyme in the mitochondrial electron transport chain which drives oxidative phosphorylation. The respiratory chain contains 3 multisubunit complexes succinate dehydrogenase (complex II, CII), ubiquinol-cytochrome c oxidoreductase (cytochrome b-c1 complex, complex III, CIII) and cytochrome c oxidase (complex IV, CIV), that cooperate to transfer electrons derived from NADH and succinate to molecular oxygen, creating an electrochemical gradient over the inner membrane that drives transmembrane transport and the ATP synthase. Cytochrome c oxidase is the component of the respiratory chain that catalyzes the reduction of oxygen to water. Electrons originating from reduced cytochrome c in the intermembrane space (IMS) are transferred via the dinuclear copper A center (CU(A)) of COX2 and heme A of COX1 to the active site in COX1, a binuclear center (BNC) formed by heme A3 and copper B (CU(B)). The BNC reduces molecular oxygen to 2 water molecules using 4 electrons from cytochrome c in the IMS and 4 protons from the mitochondrial matrix.</text>
</comment>
<comment type="pathway">
    <text>Energy metabolism; oxidative phosphorylation.</text>
</comment>
<comment type="subunit">
    <text evidence="1 2 5 6 7 10">Component of the cytochrome c oxidase (complex IV, CIV), a multisubunit enzyme composed of 12 subunits. The complex is composed of a catalytic core of 3 subunits COX1, COX2 and COX3, encoded in the mitochondrial DNA, and 9 supernumerary subunits COX4, COX5A (or COX5B), COX6, COX7, COX8, COX9, COX12, COX13 and COX26, which are encoded in the nuclear genome (PubMed:30598554, PubMed:30598556, PubMed:7851399). COX5A is the predominant subunit V during aerobic/normoxic growth, it gets replaced by COX5B under anaerobic/hypoxic conditions (PubMed:2546055). The complex exists as a monomer or a dimer and forms supercomplexes (SCs) in the inner mitochondrial membrane with a dimer of ubiquinol-cytochrome c oxidoreductase (cytochrome b-c1 complex, complex III, CIII), resulting in 2 different assemblies (supercomplexes III(2)IV and III(2)IV(2)) (PubMed:10764779, PubMed:10775262, PubMed:30598554, PubMed:30598556). COX5A interacts with COR1, CYT1 and QCR6 at the CIII-CIV interface (PubMed:30598554, PubMed:30598556).</text>
</comment>
<comment type="subcellular location">
    <subcellularLocation>
        <location evidence="6">Mitochondrion inner membrane</location>
        <topology evidence="6">Single-pass membrane protein</topology>
    </subcellularLocation>
</comment>
<comment type="induction">
    <text evidence="5 11">By oxygen at the level of transcription through heme (PubMed:2546055). Expression drops rapidly when the oxygen concentration falls below 0.5 uM O(2) (PubMed:9169434).</text>
</comment>
<comment type="miscellaneous">
    <text evidence="4">Present with 3670 molecules/cell in log phase SD medium.</text>
</comment>
<comment type="similarity">
    <text evidence="12">Belongs to the cytochrome c oxidase IV family.</text>
</comment>
<proteinExistence type="evidence at protein level"/>
<accession>P00424</accession>
<accession>D6W1C7</accession>